<protein>
    <recommendedName>
        <fullName evidence="1">Large ribosomal subunit protein uL10</fullName>
    </recommendedName>
    <alternativeName>
        <fullName evidence="2">50S ribosomal protein L10</fullName>
    </alternativeName>
</protein>
<keyword id="KW-0687">Ribonucleoprotein</keyword>
<keyword id="KW-0689">Ribosomal protein</keyword>
<keyword id="KW-0694">RNA-binding</keyword>
<keyword id="KW-0699">rRNA-binding</keyword>
<reference key="1">
    <citation type="journal article" date="2006" name="J. Bacteriol.">
        <title>Pathogenomic sequence analysis of Bacillus cereus and Bacillus thuringiensis isolates closely related to Bacillus anthracis.</title>
        <authorList>
            <person name="Han C.S."/>
            <person name="Xie G."/>
            <person name="Challacombe J.F."/>
            <person name="Altherr M.R."/>
            <person name="Bhotika S.S."/>
            <person name="Bruce D."/>
            <person name="Campbell C.S."/>
            <person name="Campbell M.L."/>
            <person name="Chen J."/>
            <person name="Chertkov O."/>
            <person name="Cleland C."/>
            <person name="Dimitrijevic M."/>
            <person name="Doggett N.A."/>
            <person name="Fawcett J.J."/>
            <person name="Glavina T."/>
            <person name="Goodwin L.A."/>
            <person name="Hill K.K."/>
            <person name="Hitchcock P."/>
            <person name="Jackson P.J."/>
            <person name="Keim P."/>
            <person name="Kewalramani A.R."/>
            <person name="Longmire J."/>
            <person name="Lucas S."/>
            <person name="Malfatti S."/>
            <person name="McMurry K."/>
            <person name="Meincke L.J."/>
            <person name="Misra M."/>
            <person name="Moseman B.L."/>
            <person name="Mundt M."/>
            <person name="Munk A.C."/>
            <person name="Okinaka R.T."/>
            <person name="Parson-Quintana B."/>
            <person name="Reilly L.P."/>
            <person name="Richardson P."/>
            <person name="Robinson D.L."/>
            <person name="Rubin E."/>
            <person name="Saunders E."/>
            <person name="Tapia R."/>
            <person name="Tesmer J.G."/>
            <person name="Thayer N."/>
            <person name="Thompson L.S."/>
            <person name="Tice H."/>
            <person name="Ticknor L.O."/>
            <person name="Wills P.L."/>
            <person name="Brettin T.S."/>
            <person name="Gilna P."/>
        </authorList>
    </citation>
    <scope>NUCLEOTIDE SEQUENCE [LARGE SCALE GENOMIC DNA]</scope>
    <source>
        <strain>97-27</strain>
    </source>
</reference>
<dbReference type="EMBL" id="AE017355">
    <property type="protein sequence ID" value="AAT61492.1"/>
    <property type="molecule type" value="Genomic_DNA"/>
</dbReference>
<dbReference type="RefSeq" id="WP_000048716.1">
    <property type="nucleotide sequence ID" value="NC_005957.1"/>
</dbReference>
<dbReference type="RefSeq" id="YP_034451.1">
    <property type="nucleotide sequence ID" value="NC_005957.1"/>
</dbReference>
<dbReference type="SMR" id="Q6HPR9"/>
<dbReference type="GeneID" id="93010954"/>
<dbReference type="KEGG" id="btk:BT9727_0095"/>
<dbReference type="PATRIC" id="fig|281309.8.peg.96"/>
<dbReference type="HOGENOM" id="CLU_092227_2_0_9"/>
<dbReference type="Proteomes" id="UP000001301">
    <property type="component" value="Chromosome"/>
</dbReference>
<dbReference type="GO" id="GO:0015934">
    <property type="term" value="C:large ribosomal subunit"/>
    <property type="evidence" value="ECO:0007669"/>
    <property type="project" value="InterPro"/>
</dbReference>
<dbReference type="GO" id="GO:0070180">
    <property type="term" value="F:large ribosomal subunit rRNA binding"/>
    <property type="evidence" value="ECO:0007669"/>
    <property type="project" value="UniProtKB-UniRule"/>
</dbReference>
<dbReference type="GO" id="GO:0003735">
    <property type="term" value="F:structural constituent of ribosome"/>
    <property type="evidence" value="ECO:0007669"/>
    <property type="project" value="InterPro"/>
</dbReference>
<dbReference type="GO" id="GO:0006412">
    <property type="term" value="P:translation"/>
    <property type="evidence" value="ECO:0007669"/>
    <property type="project" value="UniProtKB-UniRule"/>
</dbReference>
<dbReference type="CDD" id="cd05797">
    <property type="entry name" value="Ribosomal_L10"/>
    <property type="match status" value="1"/>
</dbReference>
<dbReference type="FunFam" id="3.30.70.1730:FF:000001">
    <property type="entry name" value="50S ribosomal protein L10"/>
    <property type="match status" value="1"/>
</dbReference>
<dbReference type="Gene3D" id="3.30.70.1730">
    <property type="match status" value="1"/>
</dbReference>
<dbReference type="Gene3D" id="6.10.250.290">
    <property type="match status" value="1"/>
</dbReference>
<dbReference type="HAMAP" id="MF_00362">
    <property type="entry name" value="Ribosomal_uL10"/>
    <property type="match status" value="1"/>
</dbReference>
<dbReference type="InterPro" id="IPR001790">
    <property type="entry name" value="Ribosomal_uL10"/>
</dbReference>
<dbReference type="InterPro" id="IPR043141">
    <property type="entry name" value="Ribosomal_uL10-like_sf"/>
</dbReference>
<dbReference type="InterPro" id="IPR022973">
    <property type="entry name" value="Ribosomal_uL10_bac"/>
</dbReference>
<dbReference type="InterPro" id="IPR047865">
    <property type="entry name" value="Ribosomal_uL10_bac_type"/>
</dbReference>
<dbReference type="InterPro" id="IPR002363">
    <property type="entry name" value="Ribosomal_uL10_CS_bac"/>
</dbReference>
<dbReference type="NCBIfam" id="NF000955">
    <property type="entry name" value="PRK00099.1-1"/>
    <property type="match status" value="1"/>
</dbReference>
<dbReference type="PANTHER" id="PTHR11560">
    <property type="entry name" value="39S RIBOSOMAL PROTEIN L10, MITOCHONDRIAL"/>
    <property type="match status" value="1"/>
</dbReference>
<dbReference type="Pfam" id="PF00466">
    <property type="entry name" value="Ribosomal_L10"/>
    <property type="match status" value="1"/>
</dbReference>
<dbReference type="SUPFAM" id="SSF160369">
    <property type="entry name" value="Ribosomal protein L10-like"/>
    <property type="match status" value="1"/>
</dbReference>
<dbReference type="PROSITE" id="PS01109">
    <property type="entry name" value="RIBOSOMAL_L10"/>
    <property type="match status" value="1"/>
</dbReference>
<accession>Q6HPR9</accession>
<evidence type="ECO:0000255" key="1">
    <source>
        <dbReference type="HAMAP-Rule" id="MF_00362"/>
    </source>
</evidence>
<evidence type="ECO:0000305" key="2"/>
<proteinExistence type="inferred from homology"/>
<organism>
    <name type="scientific">Bacillus thuringiensis subsp. konkukian (strain 97-27)</name>
    <dbReference type="NCBI Taxonomy" id="281309"/>
    <lineage>
        <taxon>Bacteria</taxon>
        <taxon>Bacillati</taxon>
        <taxon>Bacillota</taxon>
        <taxon>Bacilli</taxon>
        <taxon>Bacillales</taxon>
        <taxon>Bacillaceae</taxon>
        <taxon>Bacillus</taxon>
        <taxon>Bacillus cereus group</taxon>
    </lineage>
</organism>
<name>RL10_BACHK</name>
<gene>
    <name evidence="1" type="primary">rplJ</name>
    <name type="ordered locus">BT9727_0095</name>
</gene>
<feature type="chain" id="PRO_0000154586" description="Large ribosomal subunit protein uL10">
    <location>
        <begin position="1"/>
        <end position="166"/>
    </location>
</feature>
<sequence>MSKVIETKQQVVTEIADKLRASKSTIVVDYRGLTVSEATELRKQLREAGVEFKVYKNSLTRRAAESAEMAELNEFLTGPNAIAFSNEDVVAPAKVLNDFAKDHEALEIKAGVIEGKLVTLDEVKAIATLPSREGLLSMLLSVLQAPIRNLALATKAVADQKEEQGA</sequence>
<comment type="function">
    <text evidence="1">Forms part of the ribosomal stalk, playing a central role in the interaction of the ribosome with GTP-bound translation factors.</text>
</comment>
<comment type="subunit">
    <text evidence="1">Part of the ribosomal stalk of the 50S ribosomal subunit. The N-terminus interacts with L11 and the large rRNA to form the base of the stalk. The C-terminus forms an elongated spine to which L12 dimers bind in a sequential fashion forming a multimeric L10(L12)X complex.</text>
</comment>
<comment type="similarity">
    <text evidence="1">Belongs to the universal ribosomal protein uL10 family.</text>
</comment>